<organism>
    <name type="scientific">Staphylococcus saprophyticus subsp. saprophyticus (strain ATCC 15305 / DSM 20229 / NCIMB 8711 / NCTC 7292 / S-41)</name>
    <dbReference type="NCBI Taxonomy" id="342451"/>
    <lineage>
        <taxon>Bacteria</taxon>
        <taxon>Bacillati</taxon>
        <taxon>Bacillota</taxon>
        <taxon>Bacilli</taxon>
        <taxon>Bacillales</taxon>
        <taxon>Staphylococcaceae</taxon>
        <taxon>Staphylococcus</taxon>
    </lineage>
</organism>
<comment type="function">
    <text evidence="1">Cell wall formation. Catalyzes the transfer of a GlcNAc subunit on undecaprenyl-pyrophosphoryl-MurNAc-pentapeptide (lipid intermediate I) to form undecaprenyl-pyrophosphoryl-MurNAc-(pentapeptide)GlcNAc (lipid intermediate II).</text>
</comment>
<comment type="catalytic activity">
    <reaction evidence="1">
        <text>Mur2Ac(oyl-L-Ala-gamma-D-Glu-L-Lys-D-Ala-D-Ala)-di-trans,octa-cis-undecaprenyl diphosphate + UDP-N-acetyl-alpha-D-glucosamine = beta-D-GlcNAc-(1-&gt;4)-Mur2Ac(oyl-L-Ala-gamma-D-Glu-L-Lys-D-Ala-D-Ala)-di-trans,octa-cis-undecaprenyl diphosphate + UDP + H(+)</text>
        <dbReference type="Rhea" id="RHEA:23192"/>
        <dbReference type="ChEBI" id="CHEBI:15378"/>
        <dbReference type="ChEBI" id="CHEBI:57705"/>
        <dbReference type="ChEBI" id="CHEBI:58223"/>
        <dbReference type="ChEBI" id="CHEBI:60032"/>
        <dbReference type="ChEBI" id="CHEBI:60033"/>
        <dbReference type="EC" id="2.4.1.227"/>
    </reaction>
</comment>
<comment type="pathway">
    <text evidence="1">Cell wall biogenesis; peptidoglycan biosynthesis.</text>
</comment>
<comment type="subcellular location">
    <subcellularLocation>
        <location evidence="1">Cell membrane</location>
        <topology evidence="1">Peripheral membrane protein</topology>
        <orientation evidence="1">Cytoplasmic side</orientation>
    </subcellularLocation>
</comment>
<comment type="similarity">
    <text evidence="1">Belongs to the glycosyltransferase 28 family. MurG subfamily.</text>
</comment>
<proteinExistence type="inferred from homology"/>
<feature type="chain" id="PRO_0000225098" description="UDP-N-acetylglucosamine--N-acetylmuramyl-(pentapeptide) pyrophosphoryl-undecaprenol N-acetylglucosamine transferase">
    <location>
        <begin position="1"/>
        <end position="358"/>
    </location>
</feature>
<feature type="binding site" evidence="1">
    <location>
        <position position="166"/>
    </location>
    <ligand>
        <name>UDP-N-acetyl-alpha-D-glucosamine</name>
        <dbReference type="ChEBI" id="CHEBI:57705"/>
    </ligand>
</feature>
<feature type="binding site" evidence="1">
    <location>
        <position position="196"/>
    </location>
    <ligand>
        <name>UDP-N-acetyl-alpha-D-glucosamine</name>
        <dbReference type="ChEBI" id="CHEBI:57705"/>
    </ligand>
</feature>
<feature type="binding site" evidence="1">
    <location>
        <position position="291"/>
    </location>
    <ligand>
        <name>UDP-N-acetyl-alpha-D-glucosamine</name>
        <dbReference type="ChEBI" id="CHEBI:57705"/>
    </ligand>
</feature>
<dbReference type="EC" id="2.4.1.227" evidence="1"/>
<dbReference type="EMBL" id="AP008934">
    <property type="protein sequence ID" value="BAE18466.1"/>
    <property type="molecule type" value="Genomic_DNA"/>
</dbReference>
<dbReference type="RefSeq" id="WP_011303102.1">
    <property type="nucleotide sequence ID" value="NZ_MTGA01000038.1"/>
</dbReference>
<dbReference type="SMR" id="Q49XM9"/>
<dbReference type="CAZy" id="GT28">
    <property type="family name" value="Glycosyltransferase Family 28"/>
</dbReference>
<dbReference type="GeneID" id="3616561"/>
<dbReference type="KEGG" id="ssp:SSP1321"/>
<dbReference type="PATRIC" id="fig|342451.11.peg.1323"/>
<dbReference type="eggNOG" id="COG0707">
    <property type="taxonomic scope" value="Bacteria"/>
</dbReference>
<dbReference type="HOGENOM" id="CLU_037404_0_0_9"/>
<dbReference type="OrthoDB" id="9808936at2"/>
<dbReference type="UniPathway" id="UPA00219"/>
<dbReference type="Proteomes" id="UP000006371">
    <property type="component" value="Chromosome"/>
</dbReference>
<dbReference type="GO" id="GO:0005886">
    <property type="term" value="C:plasma membrane"/>
    <property type="evidence" value="ECO:0007669"/>
    <property type="project" value="UniProtKB-SubCell"/>
</dbReference>
<dbReference type="GO" id="GO:0050511">
    <property type="term" value="F:undecaprenyldiphospho-muramoylpentapeptide beta-N-acetylglucosaminyltransferase activity"/>
    <property type="evidence" value="ECO:0007669"/>
    <property type="project" value="UniProtKB-UniRule"/>
</dbReference>
<dbReference type="GO" id="GO:0005975">
    <property type="term" value="P:carbohydrate metabolic process"/>
    <property type="evidence" value="ECO:0007669"/>
    <property type="project" value="InterPro"/>
</dbReference>
<dbReference type="GO" id="GO:0051301">
    <property type="term" value="P:cell division"/>
    <property type="evidence" value="ECO:0007669"/>
    <property type="project" value="UniProtKB-KW"/>
</dbReference>
<dbReference type="GO" id="GO:0071555">
    <property type="term" value="P:cell wall organization"/>
    <property type="evidence" value="ECO:0007669"/>
    <property type="project" value="UniProtKB-KW"/>
</dbReference>
<dbReference type="GO" id="GO:0030259">
    <property type="term" value="P:lipid glycosylation"/>
    <property type="evidence" value="ECO:0007669"/>
    <property type="project" value="UniProtKB-UniRule"/>
</dbReference>
<dbReference type="GO" id="GO:0009252">
    <property type="term" value="P:peptidoglycan biosynthetic process"/>
    <property type="evidence" value="ECO:0007669"/>
    <property type="project" value="UniProtKB-UniRule"/>
</dbReference>
<dbReference type="GO" id="GO:0008360">
    <property type="term" value="P:regulation of cell shape"/>
    <property type="evidence" value="ECO:0007669"/>
    <property type="project" value="UniProtKB-KW"/>
</dbReference>
<dbReference type="CDD" id="cd03785">
    <property type="entry name" value="GT28_MurG"/>
    <property type="match status" value="1"/>
</dbReference>
<dbReference type="Gene3D" id="3.40.50.2000">
    <property type="entry name" value="Glycogen Phosphorylase B"/>
    <property type="match status" value="2"/>
</dbReference>
<dbReference type="HAMAP" id="MF_00033">
    <property type="entry name" value="MurG"/>
    <property type="match status" value="1"/>
</dbReference>
<dbReference type="InterPro" id="IPR006009">
    <property type="entry name" value="GlcNAc_MurG"/>
</dbReference>
<dbReference type="InterPro" id="IPR007235">
    <property type="entry name" value="Glyco_trans_28_C"/>
</dbReference>
<dbReference type="InterPro" id="IPR004276">
    <property type="entry name" value="GlycoTrans_28_N"/>
</dbReference>
<dbReference type="NCBIfam" id="NF009102">
    <property type="entry name" value="PRK12446.1"/>
    <property type="match status" value="1"/>
</dbReference>
<dbReference type="PANTHER" id="PTHR21015:SF27">
    <property type="entry name" value="UDP-N-ACETYLGLUCOSAMINE--N-ACETYLMURAMYL-(PENTAPEPTIDE) PYROPHOSPHORYL-UNDECAPRENOL N-ACETYLGLUCOSAMINE TRANSFERASE"/>
    <property type="match status" value="1"/>
</dbReference>
<dbReference type="PANTHER" id="PTHR21015">
    <property type="entry name" value="UDP-N-ACETYLGLUCOSAMINE--N-ACETYLMURAMYL-(PENTAPEPTIDE) PYROPHOSPHORYL-UNDECAPRENOL N-ACETYLGLUCOSAMINE TRANSFERASE 1"/>
    <property type="match status" value="1"/>
</dbReference>
<dbReference type="Pfam" id="PF04101">
    <property type="entry name" value="Glyco_tran_28_C"/>
    <property type="match status" value="1"/>
</dbReference>
<dbReference type="Pfam" id="PF03033">
    <property type="entry name" value="Glyco_transf_28"/>
    <property type="match status" value="1"/>
</dbReference>
<dbReference type="SUPFAM" id="SSF53756">
    <property type="entry name" value="UDP-Glycosyltransferase/glycogen phosphorylase"/>
    <property type="match status" value="1"/>
</dbReference>
<evidence type="ECO:0000255" key="1">
    <source>
        <dbReference type="HAMAP-Rule" id="MF_00033"/>
    </source>
</evidence>
<gene>
    <name evidence="1" type="primary">murG</name>
    <name type="ordered locus">SSP1321</name>
</gene>
<sequence>MTKIAFTGGGTVGHVSVNLSLIPTAIEEGYDTFYIGSKNGIEREMIESQLPSIKYHSISSGKLRRYISWDNIKDIFKVLKGVLDARSVLKKEKPDLLFSKGGFVSVPVVIAAKSLKIPTIIHESDLTPGLANKISLKFAKKIYTTFEDTLNYLPKDKADFVGATVREDLKTGDKHRGYQLTEFNNDKKVLLVMGGSLGSKKLNDIIRQNLETLQETYQVIHLTGKGLLDNSYVGTKDYIQFEFVKDDLTDLLAITDTVISRAGSNAIYEFLALRIPMLLIPLGLDQSRGDQIDNAKHFESKGFGKTILEDTLTENELKTQLREIETNRDDIIKQMQTYKESFTRQDLFQKIINDALSE</sequence>
<keyword id="KW-0131">Cell cycle</keyword>
<keyword id="KW-0132">Cell division</keyword>
<keyword id="KW-1003">Cell membrane</keyword>
<keyword id="KW-0133">Cell shape</keyword>
<keyword id="KW-0961">Cell wall biogenesis/degradation</keyword>
<keyword id="KW-0328">Glycosyltransferase</keyword>
<keyword id="KW-0472">Membrane</keyword>
<keyword id="KW-0573">Peptidoglycan synthesis</keyword>
<keyword id="KW-1185">Reference proteome</keyword>
<keyword id="KW-0808">Transferase</keyword>
<accession>Q49XM9</accession>
<reference key="1">
    <citation type="journal article" date="2005" name="Proc. Natl. Acad. Sci. U.S.A.">
        <title>Whole genome sequence of Staphylococcus saprophyticus reveals the pathogenesis of uncomplicated urinary tract infection.</title>
        <authorList>
            <person name="Kuroda M."/>
            <person name="Yamashita A."/>
            <person name="Hirakawa H."/>
            <person name="Kumano M."/>
            <person name="Morikawa K."/>
            <person name="Higashide M."/>
            <person name="Maruyama A."/>
            <person name="Inose Y."/>
            <person name="Matoba K."/>
            <person name="Toh H."/>
            <person name="Kuhara S."/>
            <person name="Hattori M."/>
            <person name="Ohta T."/>
        </authorList>
    </citation>
    <scope>NUCLEOTIDE SEQUENCE [LARGE SCALE GENOMIC DNA]</scope>
    <source>
        <strain>ATCC 15305 / DSM 20229 / NCIMB 8711 / NCTC 7292 / S-41</strain>
    </source>
</reference>
<protein>
    <recommendedName>
        <fullName evidence="1">UDP-N-acetylglucosamine--N-acetylmuramyl-(pentapeptide) pyrophosphoryl-undecaprenol N-acetylglucosamine transferase</fullName>
        <ecNumber evidence="1">2.4.1.227</ecNumber>
    </recommendedName>
    <alternativeName>
        <fullName evidence="1">Undecaprenyl-PP-MurNAc-pentapeptide-UDPGlcNAc GlcNAc transferase</fullName>
    </alternativeName>
</protein>
<name>MURG_STAS1</name>